<proteinExistence type="inferred from homology"/>
<feature type="chain" id="PRO_0000190330" description="Recombination protein RecR">
    <location>
        <begin position="1"/>
        <end position="193"/>
    </location>
</feature>
<feature type="domain" description="Toprim" evidence="1">
    <location>
        <begin position="84"/>
        <end position="170"/>
    </location>
</feature>
<feature type="zinc finger region" description="C4-type" evidence="1">
    <location>
        <begin position="61"/>
        <end position="76"/>
    </location>
</feature>
<dbReference type="EMBL" id="AE000511">
    <property type="protein sequence ID" value="AAD07970.1"/>
    <property type="molecule type" value="Genomic_DNA"/>
</dbReference>
<dbReference type="PIR" id="E64635">
    <property type="entry name" value="E64635"/>
</dbReference>
<dbReference type="RefSeq" id="NP_207717.1">
    <property type="nucleotide sequence ID" value="NC_000915.1"/>
</dbReference>
<dbReference type="RefSeq" id="WP_001099619.1">
    <property type="nucleotide sequence ID" value="NC_018939.1"/>
</dbReference>
<dbReference type="SMR" id="P56214"/>
<dbReference type="FunCoup" id="P56214">
    <property type="interactions" value="176"/>
</dbReference>
<dbReference type="STRING" id="85962.HP_0925"/>
<dbReference type="PaxDb" id="85962-C694_04760"/>
<dbReference type="EnsemblBacteria" id="AAD07970">
    <property type="protein sequence ID" value="AAD07970"/>
    <property type="gene ID" value="HP_0925"/>
</dbReference>
<dbReference type="KEGG" id="heo:C694_04760"/>
<dbReference type="KEGG" id="hpy:HP_0925"/>
<dbReference type="PATRIC" id="fig|85962.47.peg.990"/>
<dbReference type="eggNOG" id="COG0353">
    <property type="taxonomic scope" value="Bacteria"/>
</dbReference>
<dbReference type="InParanoid" id="P56214"/>
<dbReference type="OrthoDB" id="9802672at2"/>
<dbReference type="PhylomeDB" id="P56214"/>
<dbReference type="Proteomes" id="UP000000429">
    <property type="component" value="Chromosome"/>
</dbReference>
<dbReference type="GO" id="GO:0003677">
    <property type="term" value="F:DNA binding"/>
    <property type="evidence" value="ECO:0007669"/>
    <property type="project" value="UniProtKB-UniRule"/>
</dbReference>
<dbReference type="GO" id="GO:0008270">
    <property type="term" value="F:zinc ion binding"/>
    <property type="evidence" value="ECO:0007669"/>
    <property type="project" value="UniProtKB-KW"/>
</dbReference>
<dbReference type="GO" id="GO:0006302">
    <property type="term" value="P:double-strand break repair"/>
    <property type="evidence" value="ECO:0000318"/>
    <property type="project" value="GO_Central"/>
</dbReference>
<dbReference type="GO" id="GO:0000725">
    <property type="term" value="P:recombinational repair"/>
    <property type="evidence" value="ECO:0000318"/>
    <property type="project" value="GO_Central"/>
</dbReference>
<dbReference type="CDD" id="cd01025">
    <property type="entry name" value="TOPRIM_recR"/>
    <property type="match status" value="1"/>
</dbReference>
<dbReference type="Gene3D" id="3.30.60.80">
    <property type="match status" value="1"/>
</dbReference>
<dbReference type="Gene3D" id="3.40.1360.10">
    <property type="match status" value="1"/>
</dbReference>
<dbReference type="Gene3D" id="1.10.8.420">
    <property type="entry name" value="RecR Domain 1"/>
    <property type="match status" value="1"/>
</dbReference>
<dbReference type="HAMAP" id="MF_00017">
    <property type="entry name" value="RecR"/>
    <property type="match status" value="1"/>
</dbReference>
<dbReference type="InterPro" id="IPR000093">
    <property type="entry name" value="DNA_Rcmb_RecR"/>
</dbReference>
<dbReference type="InterPro" id="IPR023627">
    <property type="entry name" value="Rcmb_RecR"/>
</dbReference>
<dbReference type="InterPro" id="IPR015967">
    <property type="entry name" value="Rcmb_RecR_Znf"/>
</dbReference>
<dbReference type="InterPro" id="IPR006171">
    <property type="entry name" value="TOPRIM_dom"/>
</dbReference>
<dbReference type="InterPro" id="IPR034137">
    <property type="entry name" value="TOPRIM_RecR"/>
</dbReference>
<dbReference type="NCBIfam" id="TIGR00615">
    <property type="entry name" value="recR"/>
    <property type="match status" value="1"/>
</dbReference>
<dbReference type="PANTHER" id="PTHR30446">
    <property type="entry name" value="RECOMBINATION PROTEIN RECR"/>
    <property type="match status" value="1"/>
</dbReference>
<dbReference type="PANTHER" id="PTHR30446:SF0">
    <property type="entry name" value="RECOMBINATION PROTEIN RECR"/>
    <property type="match status" value="1"/>
</dbReference>
<dbReference type="Pfam" id="PF21176">
    <property type="entry name" value="RecR_HhH"/>
    <property type="match status" value="1"/>
</dbReference>
<dbReference type="Pfam" id="PF02132">
    <property type="entry name" value="RecR_ZnF"/>
    <property type="match status" value="1"/>
</dbReference>
<dbReference type="SUPFAM" id="SSF111304">
    <property type="entry name" value="Recombination protein RecR"/>
    <property type="match status" value="1"/>
</dbReference>
<dbReference type="PROSITE" id="PS01300">
    <property type="entry name" value="RECR"/>
    <property type="match status" value="1"/>
</dbReference>
<dbReference type="PROSITE" id="PS50880">
    <property type="entry name" value="TOPRIM"/>
    <property type="match status" value="1"/>
</dbReference>
<keyword id="KW-0227">DNA damage</keyword>
<keyword id="KW-0233">DNA recombination</keyword>
<keyword id="KW-0234">DNA repair</keyword>
<keyword id="KW-0479">Metal-binding</keyword>
<keyword id="KW-1185">Reference proteome</keyword>
<keyword id="KW-0862">Zinc</keyword>
<keyword id="KW-0863">Zinc-finger</keyword>
<comment type="function">
    <text evidence="1">May play a role in DNA repair. It seems to be involved in an RecBC-independent recombinational process of DNA repair. It may act with RecF and RecO.</text>
</comment>
<comment type="similarity">
    <text evidence="1">Belongs to the RecR family.</text>
</comment>
<gene>
    <name evidence="1" type="primary">recR</name>
    <name type="ordered locus">HP_0925</name>
</gene>
<name>RECR_HELPY</name>
<organism>
    <name type="scientific">Helicobacter pylori (strain ATCC 700392 / 26695)</name>
    <name type="common">Campylobacter pylori</name>
    <dbReference type="NCBI Taxonomy" id="85962"/>
    <lineage>
        <taxon>Bacteria</taxon>
        <taxon>Pseudomonadati</taxon>
        <taxon>Campylobacterota</taxon>
        <taxon>Epsilonproteobacteria</taxon>
        <taxon>Campylobacterales</taxon>
        <taxon>Helicobacteraceae</taxon>
        <taxon>Helicobacter</taxon>
    </lineage>
</organism>
<sequence length="193" mass="22008">MNTYKNSLNHFLNLVDCLEKIPNVGKKSAFKMAYHLGLENPYLALKITHALENALENLKTCSSCNALSESEVCEICSDESRQNSQLCMVLHPRDVFILEDLKDFLGRYYVLNSIEEVDFNALEKRLIEENIKEIIFAFPPTLANDSLMLYIEDKLQHFHLTFTKIAQGVPTGVNFENIDSVSLSRAFNSRIKA</sequence>
<evidence type="ECO:0000255" key="1">
    <source>
        <dbReference type="HAMAP-Rule" id="MF_00017"/>
    </source>
</evidence>
<reference key="1">
    <citation type="journal article" date="1997" name="Nature">
        <title>The complete genome sequence of the gastric pathogen Helicobacter pylori.</title>
        <authorList>
            <person name="Tomb J.-F."/>
            <person name="White O."/>
            <person name="Kerlavage A.R."/>
            <person name="Clayton R.A."/>
            <person name="Sutton G.G."/>
            <person name="Fleischmann R.D."/>
            <person name="Ketchum K.A."/>
            <person name="Klenk H.-P."/>
            <person name="Gill S.R."/>
            <person name="Dougherty B.A."/>
            <person name="Nelson K.E."/>
            <person name="Quackenbush J."/>
            <person name="Zhou L."/>
            <person name="Kirkness E.F."/>
            <person name="Peterson S.N."/>
            <person name="Loftus B.J."/>
            <person name="Richardson D.L."/>
            <person name="Dodson R.J."/>
            <person name="Khalak H.G."/>
            <person name="Glodek A."/>
            <person name="McKenney K."/>
            <person name="FitzGerald L.M."/>
            <person name="Lee N."/>
            <person name="Adams M.D."/>
            <person name="Hickey E.K."/>
            <person name="Berg D.E."/>
            <person name="Gocayne J.D."/>
            <person name="Utterback T.R."/>
            <person name="Peterson J.D."/>
            <person name="Kelley J.M."/>
            <person name="Cotton M.D."/>
            <person name="Weidman J.F."/>
            <person name="Fujii C."/>
            <person name="Bowman C."/>
            <person name="Watthey L."/>
            <person name="Wallin E."/>
            <person name="Hayes W.S."/>
            <person name="Borodovsky M."/>
            <person name="Karp P.D."/>
            <person name="Smith H.O."/>
            <person name="Fraser C.M."/>
            <person name="Venter J.C."/>
        </authorList>
    </citation>
    <scope>NUCLEOTIDE SEQUENCE [LARGE SCALE GENOMIC DNA]</scope>
    <source>
        <strain>ATCC 700392 / 26695</strain>
    </source>
</reference>
<protein>
    <recommendedName>
        <fullName evidence="1">Recombination protein RecR</fullName>
    </recommendedName>
</protein>
<accession>P56214</accession>